<dbReference type="EC" id="2.1.3.2" evidence="1"/>
<dbReference type="EMBL" id="CP001620">
    <property type="protein sequence ID" value="ACR17746.1"/>
    <property type="molecule type" value="Genomic_DNA"/>
</dbReference>
<dbReference type="RefSeq" id="WP_012731633.1">
    <property type="nucleotide sequence ID" value="NC_012704.1"/>
</dbReference>
<dbReference type="SMR" id="C4LIU1"/>
<dbReference type="STRING" id="645127.ckrop_3001"/>
<dbReference type="KEGG" id="ckp:ckrop_3001"/>
<dbReference type="eggNOG" id="COG0540">
    <property type="taxonomic scope" value="Bacteria"/>
</dbReference>
<dbReference type="HOGENOM" id="CLU_043846_2_0_11"/>
<dbReference type="OrthoDB" id="9774690at2"/>
<dbReference type="UniPathway" id="UPA00070">
    <property type="reaction ID" value="UER00116"/>
</dbReference>
<dbReference type="Proteomes" id="UP000001473">
    <property type="component" value="Chromosome"/>
</dbReference>
<dbReference type="GO" id="GO:0005829">
    <property type="term" value="C:cytosol"/>
    <property type="evidence" value="ECO:0007669"/>
    <property type="project" value="TreeGrafter"/>
</dbReference>
<dbReference type="GO" id="GO:0016597">
    <property type="term" value="F:amino acid binding"/>
    <property type="evidence" value="ECO:0007669"/>
    <property type="project" value="InterPro"/>
</dbReference>
<dbReference type="GO" id="GO:0004070">
    <property type="term" value="F:aspartate carbamoyltransferase activity"/>
    <property type="evidence" value="ECO:0007669"/>
    <property type="project" value="UniProtKB-UniRule"/>
</dbReference>
<dbReference type="GO" id="GO:0006207">
    <property type="term" value="P:'de novo' pyrimidine nucleobase biosynthetic process"/>
    <property type="evidence" value="ECO:0007669"/>
    <property type="project" value="InterPro"/>
</dbReference>
<dbReference type="GO" id="GO:0044205">
    <property type="term" value="P:'de novo' UMP biosynthetic process"/>
    <property type="evidence" value="ECO:0007669"/>
    <property type="project" value="UniProtKB-UniRule"/>
</dbReference>
<dbReference type="GO" id="GO:0006520">
    <property type="term" value="P:amino acid metabolic process"/>
    <property type="evidence" value="ECO:0007669"/>
    <property type="project" value="InterPro"/>
</dbReference>
<dbReference type="FunFam" id="3.40.50.1370:FF:000007">
    <property type="entry name" value="Aspartate carbamoyltransferase"/>
    <property type="match status" value="1"/>
</dbReference>
<dbReference type="Gene3D" id="3.40.50.1370">
    <property type="entry name" value="Aspartate/ornithine carbamoyltransferase"/>
    <property type="match status" value="2"/>
</dbReference>
<dbReference type="HAMAP" id="MF_00001">
    <property type="entry name" value="Asp_carb_tr"/>
    <property type="match status" value="1"/>
</dbReference>
<dbReference type="InterPro" id="IPR006132">
    <property type="entry name" value="Asp/Orn_carbamoyltranf_P-bd"/>
</dbReference>
<dbReference type="InterPro" id="IPR006130">
    <property type="entry name" value="Asp/Orn_carbamoylTrfase"/>
</dbReference>
<dbReference type="InterPro" id="IPR036901">
    <property type="entry name" value="Asp/Orn_carbamoylTrfase_sf"/>
</dbReference>
<dbReference type="InterPro" id="IPR002082">
    <property type="entry name" value="Asp_carbamoyltransf"/>
</dbReference>
<dbReference type="InterPro" id="IPR006131">
    <property type="entry name" value="Asp_carbamoyltransf_Asp/Orn-bd"/>
</dbReference>
<dbReference type="NCBIfam" id="TIGR00670">
    <property type="entry name" value="asp_carb_tr"/>
    <property type="match status" value="1"/>
</dbReference>
<dbReference type="NCBIfam" id="NF002032">
    <property type="entry name" value="PRK00856.1"/>
    <property type="match status" value="1"/>
</dbReference>
<dbReference type="PANTHER" id="PTHR45753:SF6">
    <property type="entry name" value="ASPARTATE CARBAMOYLTRANSFERASE"/>
    <property type="match status" value="1"/>
</dbReference>
<dbReference type="PANTHER" id="PTHR45753">
    <property type="entry name" value="ORNITHINE CARBAMOYLTRANSFERASE, MITOCHONDRIAL"/>
    <property type="match status" value="1"/>
</dbReference>
<dbReference type="Pfam" id="PF00185">
    <property type="entry name" value="OTCace"/>
    <property type="match status" value="1"/>
</dbReference>
<dbReference type="Pfam" id="PF02729">
    <property type="entry name" value="OTCace_N"/>
    <property type="match status" value="1"/>
</dbReference>
<dbReference type="PRINTS" id="PR00100">
    <property type="entry name" value="AOTCASE"/>
</dbReference>
<dbReference type="PRINTS" id="PR00101">
    <property type="entry name" value="ATCASE"/>
</dbReference>
<dbReference type="SUPFAM" id="SSF53671">
    <property type="entry name" value="Aspartate/ornithine carbamoyltransferase"/>
    <property type="match status" value="1"/>
</dbReference>
<dbReference type="PROSITE" id="PS00097">
    <property type="entry name" value="CARBAMOYLTRANSFERASE"/>
    <property type="match status" value="1"/>
</dbReference>
<comment type="function">
    <text evidence="1">Catalyzes the condensation of carbamoyl phosphate and aspartate to form carbamoyl aspartate and inorganic phosphate, the committed step in the de novo pyrimidine nucleotide biosynthesis pathway.</text>
</comment>
<comment type="catalytic activity">
    <reaction evidence="1">
        <text>carbamoyl phosphate + L-aspartate = N-carbamoyl-L-aspartate + phosphate + H(+)</text>
        <dbReference type="Rhea" id="RHEA:20013"/>
        <dbReference type="ChEBI" id="CHEBI:15378"/>
        <dbReference type="ChEBI" id="CHEBI:29991"/>
        <dbReference type="ChEBI" id="CHEBI:32814"/>
        <dbReference type="ChEBI" id="CHEBI:43474"/>
        <dbReference type="ChEBI" id="CHEBI:58228"/>
        <dbReference type="EC" id="2.1.3.2"/>
    </reaction>
</comment>
<comment type="pathway">
    <text evidence="1">Pyrimidine metabolism; UMP biosynthesis via de novo pathway; (S)-dihydroorotate from bicarbonate: step 2/3.</text>
</comment>
<comment type="subunit">
    <text evidence="1">Heterododecamer (2C3:3R2) of six catalytic PyrB chains organized as two trimers (C3), and six regulatory PyrI chains organized as three dimers (R2).</text>
</comment>
<comment type="similarity">
    <text evidence="1">Belongs to the aspartate/ornithine carbamoyltransferase superfamily. ATCase family.</text>
</comment>
<evidence type="ECO:0000255" key="1">
    <source>
        <dbReference type="HAMAP-Rule" id="MF_00001"/>
    </source>
</evidence>
<proteinExistence type="inferred from homology"/>
<gene>
    <name evidence="1" type="primary">pyrB</name>
    <name type="ordered locus">ckrop_3001</name>
</gene>
<sequence length="318" mass="34471">MKHLLSMADLSADEITGLLDEAQNFKEALEGRELKKLPTLRGRTIFTVFYENSTRTRSSFETAGKWMSADVINISASSSSVKKGESLQDTGLTLTAIGADALIIRHPSSGAAQQLAHWVAPNGDGPSVINAGDGAHQHPTQALLDALTLRQRLGGINGRKIVIVGDILHSRVARSNAELLTKLGAEVVYVAPPTLLPYGVETWPVRISYDMDSELADADAIMMLRVQAERMAGGFFPSHREYATLYGMSTAREAKMKDKAIIMHPGPMLRGMEINYSVADAPRTAVLQQVNNGVHVRMAVLFSLIIGTHGQSHTTKES</sequence>
<keyword id="KW-0665">Pyrimidine biosynthesis</keyword>
<keyword id="KW-1185">Reference proteome</keyword>
<keyword id="KW-0808">Transferase</keyword>
<protein>
    <recommendedName>
        <fullName evidence="1">Aspartate carbamoyltransferase catalytic subunit</fullName>
        <ecNumber evidence="1">2.1.3.2</ecNumber>
    </recommendedName>
    <alternativeName>
        <fullName evidence="1">Aspartate transcarbamylase</fullName>
        <shortName evidence="1">ATCase</shortName>
    </alternativeName>
</protein>
<accession>C4LIU1</accession>
<reference key="1">
    <citation type="journal article" date="2008" name="J. Biotechnol.">
        <title>Ultrafast pyrosequencing of Corynebacterium kroppenstedtii DSM44385 revealed insights into the physiology of a lipophilic corynebacterium that lacks mycolic acids.</title>
        <authorList>
            <person name="Tauch A."/>
            <person name="Schneider J."/>
            <person name="Szczepanowski R."/>
            <person name="Tilker A."/>
            <person name="Viehoever P."/>
            <person name="Gartemann K.-H."/>
            <person name="Arnold W."/>
            <person name="Blom J."/>
            <person name="Brinkrolf K."/>
            <person name="Brune I."/>
            <person name="Goetker S."/>
            <person name="Weisshaar B."/>
            <person name="Goesmann A."/>
            <person name="Droege M."/>
            <person name="Puehler A."/>
        </authorList>
    </citation>
    <scope>NUCLEOTIDE SEQUENCE [LARGE SCALE GENOMIC DNA]</scope>
    <source>
        <strain>DSM 44385 / JCM 11950 / CIP 105744 / CCUG 35717</strain>
    </source>
</reference>
<feature type="chain" id="PRO_1000201587" description="Aspartate carbamoyltransferase catalytic subunit">
    <location>
        <begin position="1"/>
        <end position="318"/>
    </location>
</feature>
<feature type="binding site" evidence="1">
    <location>
        <position position="55"/>
    </location>
    <ligand>
        <name>carbamoyl phosphate</name>
        <dbReference type="ChEBI" id="CHEBI:58228"/>
    </ligand>
</feature>
<feature type="binding site" evidence="1">
    <location>
        <position position="56"/>
    </location>
    <ligand>
        <name>carbamoyl phosphate</name>
        <dbReference type="ChEBI" id="CHEBI:58228"/>
    </ligand>
</feature>
<feature type="binding site" evidence="1">
    <location>
        <position position="83"/>
    </location>
    <ligand>
        <name>L-aspartate</name>
        <dbReference type="ChEBI" id="CHEBI:29991"/>
    </ligand>
</feature>
<feature type="binding site" evidence="1">
    <location>
        <position position="105"/>
    </location>
    <ligand>
        <name>carbamoyl phosphate</name>
        <dbReference type="ChEBI" id="CHEBI:58228"/>
    </ligand>
</feature>
<feature type="binding site" evidence="1">
    <location>
        <position position="138"/>
    </location>
    <ligand>
        <name>carbamoyl phosphate</name>
        <dbReference type="ChEBI" id="CHEBI:58228"/>
    </ligand>
</feature>
<feature type="binding site" evidence="1">
    <location>
        <position position="141"/>
    </location>
    <ligand>
        <name>carbamoyl phosphate</name>
        <dbReference type="ChEBI" id="CHEBI:58228"/>
    </ligand>
</feature>
<feature type="binding site" evidence="1">
    <location>
        <position position="171"/>
    </location>
    <ligand>
        <name>L-aspartate</name>
        <dbReference type="ChEBI" id="CHEBI:29991"/>
    </ligand>
</feature>
<feature type="binding site" evidence="1">
    <location>
        <position position="225"/>
    </location>
    <ligand>
        <name>L-aspartate</name>
        <dbReference type="ChEBI" id="CHEBI:29991"/>
    </ligand>
</feature>
<feature type="binding site" evidence="1">
    <location>
        <position position="266"/>
    </location>
    <ligand>
        <name>carbamoyl phosphate</name>
        <dbReference type="ChEBI" id="CHEBI:58228"/>
    </ligand>
</feature>
<feature type="binding site" evidence="1">
    <location>
        <position position="267"/>
    </location>
    <ligand>
        <name>carbamoyl phosphate</name>
        <dbReference type="ChEBI" id="CHEBI:58228"/>
    </ligand>
</feature>
<name>PYRB_CORK4</name>
<organism>
    <name type="scientific">Corynebacterium kroppenstedtii (strain DSM 44385 / JCM 11950 / CIP 105744 / CCUG 35717)</name>
    <dbReference type="NCBI Taxonomy" id="645127"/>
    <lineage>
        <taxon>Bacteria</taxon>
        <taxon>Bacillati</taxon>
        <taxon>Actinomycetota</taxon>
        <taxon>Actinomycetes</taxon>
        <taxon>Mycobacteriales</taxon>
        <taxon>Corynebacteriaceae</taxon>
        <taxon>Corynebacterium</taxon>
    </lineage>
</organism>